<accession>P37895</accession>
<dbReference type="EC" id="3.6.-.-"/>
<dbReference type="EMBL" id="M91449">
    <property type="protein sequence ID" value="AAA23053.1"/>
    <property type="molecule type" value="Genomic_DNA"/>
</dbReference>
<dbReference type="EMBL" id="AE005673">
    <property type="protein sequence ID" value="AAK24454.1"/>
    <property type="molecule type" value="Genomic_DNA"/>
</dbReference>
<dbReference type="PIR" id="B87557">
    <property type="entry name" value="B87557"/>
</dbReference>
<dbReference type="PIR" id="S27534">
    <property type="entry name" value="S27534"/>
</dbReference>
<dbReference type="RefSeq" id="NP_421286.1">
    <property type="nucleotide sequence ID" value="NC_002696.2"/>
</dbReference>
<dbReference type="RefSeq" id="WP_010920341.1">
    <property type="nucleotide sequence ID" value="NC_002696.2"/>
</dbReference>
<dbReference type="SMR" id="P37895"/>
<dbReference type="STRING" id="190650.CC_2483"/>
<dbReference type="EnsemblBacteria" id="AAK24454">
    <property type="protein sequence ID" value="AAK24454"/>
    <property type="gene ID" value="CC_2483"/>
</dbReference>
<dbReference type="KEGG" id="ccr:CC_2483"/>
<dbReference type="PATRIC" id="fig|190650.5.peg.2501"/>
<dbReference type="eggNOG" id="COG1703">
    <property type="taxonomic scope" value="Bacteria"/>
</dbReference>
<dbReference type="HOGENOM" id="CLU_043725_1_1_5"/>
<dbReference type="BioCyc" id="CAULO:CC2483-MONOMER"/>
<dbReference type="Proteomes" id="UP000001816">
    <property type="component" value="Chromosome"/>
</dbReference>
<dbReference type="GO" id="GO:0005737">
    <property type="term" value="C:cytoplasm"/>
    <property type="evidence" value="ECO:0007669"/>
    <property type="project" value="TreeGrafter"/>
</dbReference>
<dbReference type="GO" id="GO:0005524">
    <property type="term" value="F:ATP binding"/>
    <property type="evidence" value="ECO:0007669"/>
    <property type="project" value="UniProtKB-KW"/>
</dbReference>
<dbReference type="GO" id="GO:0016887">
    <property type="term" value="F:ATP hydrolysis activity"/>
    <property type="evidence" value="ECO:0007669"/>
    <property type="project" value="InterPro"/>
</dbReference>
<dbReference type="GO" id="GO:0005525">
    <property type="term" value="F:GTP binding"/>
    <property type="evidence" value="ECO:0007669"/>
    <property type="project" value="UniProtKB-KW"/>
</dbReference>
<dbReference type="GO" id="GO:0003924">
    <property type="term" value="F:GTPase activity"/>
    <property type="evidence" value="ECO:0007669"/>
    <property type="project" value="InterPro"/>
</dbReference>
<dbReference type="CDD" id="cd03114">
    <property type="entry name" value="MMAA-like"/>
    <property type="match status" value="1"/>
</dbReference>
<dbReference type="Gene3D" id="1.10.287.130">
    <property type="match status" value="1"/>
</dbReference>
<dbReference type="Gene3D" id="1.20.5.170">
    <property type="match status" value="1"/>
</dbReference>
<dbReference type="Gene3D" id="3.40.50.300">
    <property type="entry name" value="P-loop containing nucleotide triphosphate hydrolases"/>
    <property type="match status" value="1"/>
</dbReference>
<dbReference type="InterPro" id="IPR003593">
    <property type="entry name" value="AAA+_ATPase"/>
</dbReference>
<dbReference type="InterPro" id="IPR005129">
    <property type="entry name" value="GTPase_ArgK"/>
</dbReference>
<dbReference type="InterPro" id="IPR027417">
    <property type="entry name" value="P-loop_NTPase"/>
</dbReference>
<dbReference type="NCBIfam" id="TIGR00750">
    <property type="entry name" value="lao"/>
    <property type="match status" value="1"/>
</dbReference>
<dbReference type="NCBIfam" id="NF006958">
    <property type="entry name" value="PRK09435.1"/>
    <property type="match status" value="1"/>
</dbReference>
<dbReference type="PANTHER" id="PTHR23408:SF3">
    <property type="entry name" value="METHYLMALONIC ACIDURIA TYPE A PROTEIN, MITOCHONDRIAL"/>
    <property type="match status" value="1"/>
</dbReference>
<dbReference type="PANTHER" id="PTHR23408">
    <property type="entry name" value="METHYLMALONYL-COA MUTASE"/>
    <property type="match status" value="1"/>
</dbReference>
<dbReference type="Pfam" id="PF03308">
    <property type="entry name" value="MeaB"/>
    <property type="match status" value="1"/>
</dbReference>
<dbReference type="SMART" id="SM00382">
    <property type="entry name" value="AAA"/>
    <property type="match status" value="1"/>
</dbReference>
<dbReference type="SUPFAM" id="SSF52540">
    <property type="entry name" value="P-loop containing nucleoside triphosphate hydrolases"/>
    <property type="match status" value="1"/>
</dbReference>
<proteinExistence type="inferred from homology"/>
<protein>
    <recommendedName>
        <fullName>Putative GTPase CC_2483</fullName>
        <ecNumber>3.6.-.-</ecNumber>
    </recommendedName>
</protein>
<gene>
    <name type="ordered locus">CC_2483</name>
</gene>
<sequence>MIPALDIDSLEHRLVAGDRAALARAITLVESRRADHQVAARTLLSRLMPLTGRAQRIGITGVPGAGKSTTIERFGCNLVEAGHRVAVLAVDPSSGRHGGSILGDKTRMEQLSVQANAFIRPSPSGGALGGVARKTREAMLLCEAAGFDVVIIETVGVGQSETVVADMVDIFLALLIPGGGDELQGIKKGLIELADLLVINKADADPAKAERSARDYRNALHILTPAHPDWTPPVLTASGLTGQGLDVLWTQILRHREVMTANGARAARRADQDARWMWAMVRDRLEDAFKTAPAVAALVPDLETAVREGEVPASAAADRLLAAFGL</sequence>
<keyword id="KW-0067">ATP-binding</keyword>
<keyword id="KW-0143">Chaperone</keyword>
<keyword id="KW-0342">GTP-binding</keyword>
<keyword id="KW-0378">Hydrolase</keyword>
<keyword id="KW-0547">Nucleotide-binding</keyword>
<keyword id="KW-1185">Reference proteome</keyword>
<evidence type="ECO:0000250" key="1"/>
<evidence type="ECO:0000305" key="2"/>
<feature type="chain" id="PRO_0000157820" description="Putative GTPase CC_2483">
    <location>
        <begin position="1"/>
        <end position="326"/>
    </location>
</feature>
<feature type="binding site" evidence="1">
    <location>
        <begin position="61"/>
        <end position="69"/>
    </location>
    <ligand>
        <name>GTP</name>
        <dbReference type="ChEBI" id="CHEBI:37565"/>
    </ligand>
</feature>
<feature type="binding site" evidence="1">
    <location>
        <position position="203"/>
    </location>
    <ligand>
        <name>GTP</name>
        <dbReference type="ChEBI" id="CHEBI:37565"/>
    </ligand>
</feature>
<feature type="binding site" evidence="1">
    <location>
        <begin position="238"/>
        <end position="240"/>
    </location>
    <ligand>
        <name>GTP</name>
        <dbReference type="ChEBI" id="CHEBI:37565"/>
    </ligand>
</feature>
<feature type="sequence conflict" description="In Ref. 1; AAA23053." evidence="2" ref="1">
    <original>N</original>
    <variation>K</variation>
    <location>
        <position position="77"/>
    </location>
</feature>
<organism>
    <name type="scientific">Caulobacter vibrioides (strain ATCC 19089 / CIP 103742 / CB 15)</name>
    <name type="common">Caulobacter crescentus</name>
    <dbReference type="NCBI Taxonomy" id="190650"/>
    <lineage>
        <taxon>Bacteria</taxon>
        <taxon>Pseudomonadati</taxon>
        <taxon>Pseudomonadota</taxon>
        <taxon>Alphaproteobacteria</taxon>
        <taxon>Caulobacterales</taxon>
        <taxon>Caulobacteraceae</taxon>
        <taxon>Caulobacter</taxon>
    </lineage>
</organism>
<name>Y2483_CAUVC</name>
<reference key="1">
    <citation type="journal article" date="1993" name="Proc. Natl. Acad. Sci. U.S.A.">
        <title>A histidine protein kinase is involved in polar organelle development in Caulobacter crescentus.</title>
        <authorList>
            <person name="Wang S.P."/>
            <person name="Sharma P.L."/>
            <person name="Schoenlein P.V."/>
            <person name="Ely B."/>
        </authorList>
    </citation>
    <scope>NUCLEOTIDE SEQUENCE [GENOMIC DNA]</scope>
    <source>
        <strain>ATCC 19089 / CIP 103742 / CB 15</strain>
    </source>
</reference>
<reference key="2">
    <citation type="journal article" date="2001" name="Proc. Natl. Acad. Sci. U.S.A.">
        <title>Complete genome sequence of Caulobacter crescentus.</title>
        <authorList>
            <person name="Nierman W.C."/>
            <person name="Feldblyum T.V."/>
            <person name="Laub M.T."/>
            <person name="Paulsen I.T."/>
            <person name="Nelson K.E."/>
            <person name="Eisen J.A."/>
            <person name="Heidelberg J.F."/>
            <person name="Alley M.R.K."/>
            <person name="Ohta N."/>
            <person name="Maddock J.R."/>
            <person name="Potocka I."/>
            <person name="Nelson W.C."/>
            <person name="Newton A."/>
            <person name="Stephens C."/>
            <person name="Phadke N.D."/>
            <person name="Ely B."/>
            <person name="DeBoy R.T."/>
            <person name="Dodson R.J."/>
            <person name="Durkin A.S."/>
            <person name="Gwinn M.L."/>
            <person name="Haft D.H."/>
            <person name="Kolonay J.F."/>
            <person name="Smit J."/>
            <person name="Craven M.B."/>
            <person name="Khouri H.M."/>
            <person name="Shetty J."/>
            <person name="Berry K.J."/>
            <person name="Utterback T.R."/>
            <person name="Tran K."/>
            <person name="Wolf A.M."/>
            <person name="Vamathevan J.J."/>
            <person name="Ermolaeva M.D."/>
            <person name="White O."/>
            <person name="Salzberg S.L."/>
            <person name="Venter J.C."/>
            <person name="Shapiro L."/>
            <person name="Fraser C.M."/>
        </authorList>
    </citation>
    <scope>NUCLEOTIDE SEQUENCE [LARGE SCALE GENOMIC DNA]</scope>
    <source>
        <strain>ATCC 19089 / CIP 103742 / CB 15</strain>
    </source>
</reference>
<comment type="function">
    <text evidence="1">May have GTPase activity. May also bind and hydrolyze ATP. May function as chaperone (By similarity).</text>
</comment>
<comment type="similarity">
    <text evidence="2">Belongs to the SIMIBI class G3E GTPase family. ArgK/MeaB subfamily.</text>
</comment>